<dbReference type="EMBL" id="Z49358">
    <property type="protein sequence ID" value="CAA89376.1"/>
    <property type="molecule type" value="Genomic_DNA"/>
</dbReference>
<dbReference type="EMBL" id="X83502">
    <property type="protein sequence ID" value="CAA58487.1"/>
    <property type="molecule type" value="Genomic_DNA"/>
</dbReference>
<dbReference type="EMBL" id="X88851">
    <property type="protein sequence ID" value="CAA61318.1"/>
    <property type="molecule type" value="Genomic_DNA"/>
</dbReference>
<dbReference type="EMBL" id="BK006943">
    <property type="protein sequence ID" value="DAA08716.1"/>
    <property type="molecule type" value="Genomic_DNA"/>
</dbReference>
<dbReference type="PIR" id="S56027">
    <property type="entry name" value="S56027"/>
</dbReference>
<dbReference type="RefSeq" id="NP_012452.1">
    <property type="nucleotide sequence ID" value="NM_001181516.1"/>
</dbReference>
<dbReference type="SMR" id="P47030"/>
<dbReference type="BioGRID" id="33673">
    <property type="interactions" value="121"/>
</dbReference>
<dbReference type="FunCoup" id="P47030">
    <property type="interactions" value="46"/>
</dbReference>
<dbReference type="IntAct" id="P47030">
    <property type="interactions" value="5"/>
</dbReference>
<dbReference type="MINT" id="P47030"/>
<dbReference type="STRING" id="4932.YJL083W"/>
<dbReference type="iPTMnet" id="P47030"/>
<dbReference type="PaxDb" id="4932-YJL083W"/>
<dbReference type="PeptideAtlas" id="P47030"/>
<dbReference type="EnsemblFungi" id="YJL083W_mRNA">
    <property type="protein sequence ID" value="YJL083W"/>
    <property type="gene ID" value="YJL083W"/>
</dbReference>
<dbReference type="GeneID" id="853362"/>
<dbReference type="KEGG" id="sce:YJL083W"/>
<dbReference type="AGR" id="SGD:S000003619"/>
<dbReference type="SGD" id="S000003619">
    <property type="gene designation" value="TAX4"/>
</dbReference>
<dbReference type="VEuPathDB" id="FungiDB:YJL083W"/>
<dbReference type="eggNOG" id="KOG0998">
    <property type="taxonomic scope" value="Eukaryota"/>
</dbReference>
<dbReference type="GeneTree" id="ENSGT00940000176414"/>
<dbReference type="HOGENOM" id="CLU_452143_0_0_1"/>
<dbReference type="InParanoid" id="P47030"/>
<dbReference type="OMA" id="RSSXVGS"/>
<dbReference type="OrthoDB" id="10045710at2759"/>
<dbReference type="BioCyc" id="YEAST:G3O-31540-MONOMER"/>
<dbReference type="BioGRID-ORCS" id="853362">
    <property type="hits" value="1 hit in 10 CRISPR screens"/>
</dbReference>
<dbReference type="PRO" id="PR:P47030"/>
<dbReference type="Proteomes" id="UP000002311">
    <property type="component" value="Chromosome X"/>
</dbReference>
<dbReference type="RNAct" id="P47030">
    <property type="molecule type" value="protein"/>
</dbReference>
<dbReference type="GO" id="GO:0000407">
    <property type="term" value="C:phagophore assembly site"/>
    <property type="evidence" value="ECO:0000314"/>
    <property type="project" value="SGD"/>
</dbReference>
<dbReference type="GO" id="GO:0006914">
    <property type="term" value="P:autophagy"/>
    <property type="evidence" value="ECO:0000316"/>
    <property type="project" value="SGD"/>
</dbReference>
<dbReference type="GO" id="GO:0009267">
    <property type="term" value="P:cellular response to starvation"/>
    <property type="evidence" value="ECO:0000316"/>
    <property type="project" value="SGD"/>
</dbReference>
<dbReference type="GO" id="GO:0031505">
    <property type="term" value="P:fungal-type cell wall organization"/>
    <property type="evidence" value="ECO:0000316"/>
    <property type="project" value="SGD"/>
</dbReference>
<dbReference type="GO" id="GO:0006629">
    <property type="term" value="P:lipid metabolic process"/>
    <property type="evidence" value="ECO:0007669"/>
    <property type="project" value="UniProtKB-KW"/>
</dbReference>
<dbReference type="CDD" id="cd00052">
    <property type="entry name" value="EH"/>
    <property type="match status" value="1"/>
</dbReference>
<dbReference type="FunFam" id="1.10.238.10:FF:000326">
    <property type="entry name" value="IRS4p EH domain-containing protein"/>
    <property type="match status" value="1"/>
</dbReference>
<dbReference type="Gene3D" id="1.10.238.10">
    <property type="entry name" value="EF-hand"/>
    <property type="match status" value="1"/>
</dbReference>
<dbReference type="InterPro" id="IPR011992">
    <property type="entry name" value="EF-hand-dom_pair"/>
</dbReference>
<dbReference type="InterPro" id="IPR000261">
    <property type="entry name" value="EH_dom"/>
</dbReference>
<dbReference type="Pfam" id="PF12763">
    <property type="entry name" value="EH"/>
    <property type="match status" value="1"/>
</dbReference>
<dbReference type="SMART" id="SM00027">
    <property type="entry name" value="EH"/>
    <property type="match status" value="1"/>
</dbReference>
<dbReference type="SUPFAM" id="SSF47473">
    <property type="entry name" value="EF-hand"/>
    <property type="match status" value="1"/>
</dbReference>
<reference key="1">
    <citation type="journal article" date="1995" name="Yeast">
        <title>Sequence analysis of a 33.1 kb fragment from the left arm of Saccharomyces cerevisiae chromosome X, including putative proteins with leucine zippers, a fungal Zn(II)2-Cys6 binuclear cluster domain and a putative alpha 2-SCB-alpha 2 binding site.</title>
        <authorList>
            <person name="Miosga T."/>
            <person name="Schaaff-Gerstenschlaeger I."/>
            <person name="Chalwatzis N."/>
            <person name="Baur A."/>
            <person name="Boles E."/>
            <person name="Fournier C."/>
            <person name="Schmitt S."/>
            <person name="Velten C."/>
            <person name="Wilhelm N."/>
            <person name="Zimmermann F.K."/>
        </authorList>
    </citation>
    <scope>NUCLEOTIDE SEQUENCE [GENOMIC DNA]</scope>
    <source>
        <strain>ATCC 204508 / S288c</strain>
    </source>
</reference>
<reference key="2">
    <citation type="journal article" date="1996" name="EMBO J.">
        <title>Complete nucleotide sequence of Saccharomyces cerevisiae chromosome X.</title>
        <authorList>
            <person name="Galibert F."/>
            <person name="Alexandraki D."/>
            <person name="Baur A."/>
            <person name="Boles E."/>
            <person name="Chalwatzis N."/>
            <person name="Chuat J.-C."/>
            <person name="Coster F."/>
            <person name="Cziepluch C."/>
            <person name="de Haan M."/>
            <person name="Domdey H."/>
            <person name="Durand P."/>
            <person name="Entian K.-D."/>
            <person name="Gatius M."/>
            <person name="Goffeau A."/>
            <person name="Grivell L.A."/>
            <person name="Hennemann A."/>
            <person name="Herbert C.J."/>
            <person name="Heumann K."/>
            <person name="Hilger F."/>
            <person name="Hollenberg C.P."/>
            <person name="Huang M.-E."/>
            <person name="Jacq C."/>
            <person name="Jauniaux J.-C."/>
            <person name="Katsoulou C."/>
            <person name="Kirchrath L."/>
            <person name="Kleine K."/>
            <person name="Kordes E."/>
            <person name="Koetter P."/>
            <person name="Liebl S."/>
            <person name="Louis E.J."/>
            <person name="Manus V."/>
            <person name="Mewes H.-W."/>
            <person name="Miosga T."/>
            <person name="Obermaier B."/>
            <person name="Perea J."/>
            <person name="Pohl T.M."/>
            <person name="Portetelle D."/>
            <person name="Pujol A."/>
            <person name="Purnelle B."/>
            <person name="Ramezani Rad M."/>
            <person name="Rasmussen S.W."/>
            <person name="Rose M."/>
            <person name="Rossau R."/>
            <person name="Schaaff-Gerstenschlaeger I."/>
            <person name="Smits P.H.M."/>
            <person name="Scarcez T."/>
            <person name="Soriano N."/>
            <person name="To Van D."/>
            <person name="Tzermia M."/>
            <person name="Van Broekhoven A."/>
            <person name="Vandenbol M."/>
            <person name="Wedler H."/>
            <person name="von Wettstein D."/>
            <person name="Wambutt R."/>
            <person name="Zagulski M."/>
            <person name="Zollner A."/>
            <person name="Karpfinger-Hartl L."/>
        </authorList>
    </citation>
    <scope>NUCLEOTIDE SEQUENCE [LARGE SCALE GENOMIC DNA]</scope>
    <source>
        <strain>ATCC 204508 / S288c</strain>
    </source>
</reference>
<reference key="3">
    <citation type="journal article" date="2014" name="G3 (Bethesda)">
        <title>The reference genome sequence of Saccharomyces cerevisiae: Then and now.</title>
        <authorList>
            <person name="Engel S.R."/>
            <person name="Dietrich F.S."/>
            <person name="Fisk D.G."/>
            <person name="Binkley G."/>
            <person name="Balakrishnan R."/>
            <person name="Costanzo M.C."/>
            <person name="Dwight S.S."/>
            <person name="Hitz B.C."/>
            <person name="Karra K."/>
            <person name="Nash R.S."/>
            <person name="Weng S."/>
            <person name="Wong E.D."/>
            <person name="Lloyd P."/>
            <person name="Skrzypek M.S."/>
            <person name="Miyasato S.R."/>
            <person name="Simison M."/>
            <person name="Cherry J.M."/>
        </authorList>
    </citation>
    <scope>GENOME REANNOTATION</scope>
    <source>
        <strain>ATCC 204508 / S288c</strain>
    </source>
</reference>
<reference key="4">
    <citation type="journal article" date="1998" name="EMBO J.">
        <title>Recognition specificity of individual EH domains of mammals and yeast.</title>
        <authorList>
            <person name="Paoluzi S."/>
            <person name="Castagnoli L."/>
            <person name="Lauro I."/>
            <person name="Salcini A.E."/>
            <person name="Coda L."/>
            <person name="Fre' S."/>
            <person name="Confalonieri S."/>
            <person name="Pelicci P.G."/>
            <person name="Di Fiore P.P."/>
            <person name="Cesareni G."/>
        </authorList>
    </citation>
    <scope>DOMAIN</scope>
</reference>
<reference key="5">
    <citation type="journal article" date="2003" name="Nature">
        <title>Global analysis of protein expression in yeast.</title>
        <authorList>
            <person name="Ghaemmaghami S."/>
            <person name="Huh W.-K."/>
            <person name="Bower K."/>
            <person name="Howson R.W."/>
            <person name="Belle A."/>
            <person name="Dephoure N."/>
            <person name="O'Shea E.K."/>
            <person name="Weissman J.S."/>
        </authorList>
    </citation>
    <scope>LEVEL OF PROTEIN EXPRESSION [LARGE SCALE ANALYSIS]</scope>
</reference>
<reference key="6">
    <citation type="journal article" date="2004" name="J. Biol. Chem.">
        <title>Negative regulation of phosphatidylinositol 4,5-bisphosphate levels by the INP51-associated proteins TAX4 and IRS4.</title>
        <authorList>
            <person name="Morales-Johansson H."/>
            <person name="Jenoe P."/>
            <person name="Cooke F.T."/>
            <person name="Hall M.N."/>
        </authorList>
    </citation>
    <scope>FUNCTION</scope>
    <scope>INTERACTION WITH INP51</scope>
</reference>
<feature type="chain" id="PRO_0000203050" description="Protein TAX4">
    <location>
        <begin position="1"/>
        <end position="604"/>
    </location>
</feature>
<feature type="domain" description="EH">
    <location>
        <begin position="469"/>
        <end position="559"/>
    </location>
</feature>
<feature type="region of interest" description="Disordered" evidence="1">
    <location>
        <begin position="38"/>
        <end position="77"/>
    </location>
</feature>
<feature type="region of interest" description="Disordered" evidence="1">
    <location>
        <begin position="132"/>
        <end position="249"/>
    </location>
</feature>
<feature type="region of interest" description="Disordered" evidence="1">
    <location>
        <begin position="267"/>
        <end position="299"/>
    </location>
</feature>
<feature type="region of interest" description="Disordered" evidence="1">
    <location>
        <begin position="338"/>
        <end position="380"/>
    </location>
</feature>
<feature type="region of interest" description="Disordered" evidence="1">
    <location>
        <begin position="394"/>
        <end position="428"/>
    </location>
</feature>
<feature type="compositionally biased region" description="Polar residues" evidence="1">
    <location>
        <begin position="176"/>
        <end position="185"/>
    </location>
</feature>
<feature type="compositionally biased region" description="Low complexity" evidence="1">
    <location>
        <begin position="186"/>
        <end position="203"/>
    </location>
</feature>
<feature type="compositionally biased region" description="Low complexity" evidence="1">
    <location>
        <begin position="224"/>
        <end position="240"/>
    </location>
</feature>
<feature type="compositionally biased region" description="Basic residues" evidence="1">
    <location>
        <begin position="276"/>
        <end position="290"/>
    </location>
</feature>
<feature type="compositionally biased region" description="Basic residues" evidence="1">
    <location>
        <begin position="366"/>
        <end position="379"/>
    </location>
</feature>
<feature type="compositionally biased region" description="Basic residues" evidence="1">
    <location>
        <begin position="396"/>
        <end position="421"/>
    </location>
</feature>
<accession>P47030</accession>
<accession>D6VWA0</accession>
<organism>
    <name type="scientific">Saccharomyces cerevisiae (strain ATCC 204508 / S288c)</name>
    <name type="common">Baker's yeast</name>
    <dbReference type="NCBI Taxonomy" id="559292"/>
    <lineage>
        <taxon>Eukaryota</taxon>
        <taxon>Fungi</taxon>
        <taxon>Dikarya</taxon>
        <taxon>Ascomycota</taxon>
        <taxon>Saccharomycotina</taxon>
        <taxon>Saccharomycetes</taxon>
        <taxon>Saccharomycetales</taxon>
        <taxon>Saccharomycetaceae</taxon>
        <taxon>Saccharomyces</taxon>
    </lineage>
</organism>
<keyword id="KW-0443">Lipid metabolism</keyword>
<keyword id="KW-1185">Reference proteome</keyword>
<sequence length="604" mass="68768">MHFPKKKHSGNLSVVELPKEALQDSLTAAQITFKRYAHPNGNAGSAERPRHLKVESAPVVKSEPSLPRMRQPEPRSINHQYSRETLPGHSEAFSVPTTPLQTIHYDVRNKASNSPSSIAAAETAAYLAHTNSFSNRSSGVGSRDPVMDTETKPPRAPSALKNELQLNRMRIPPPSYDNNVRSRSISPQVSYSTSLSSSCSISSDGEETSYREKSTDEAFPPEPSMSSYSLASKASAKASLTDPSQRQQESDYTAMNKLNGGNIIYKGTLPDLIPRSQRKTSKPRFKHRLLRSPEQQQENLSRVYSDQTQNGRAIINTQQNVKLKTTMRRGKYAITDNDETFPYDRKSVSSDSDTDEDSNVMEIKDKKKKSRRSKIKKGLKTTAAVVGSSTSVLPFPHHHHHHHQLHNPNSHHLHTHHHTSSHKFNEDKPWKSHRDLGFITEQERKRYESMWVSNRYSYLRLLPWWPSLANEDDESHLQPLNLPQDGLMLNLVVKDIWYRSNLPRDLLVQIYNMVDTRKDGTLDRKSFIVGMWLVDQCLYGRKLTNELDQRVWNSVDGYVLGTINVKPATSDHYHNANNPLDKPSKLSVRQELKNIKRDLRNVRI</sequence>
<proteinExistence type="evidence at protein level"/>
<evidence type="ECO:0000256" key="1">
    <source>
        <dbReference type="SAM" id="MobiDB-lite"/>
    </source>
</evidence>
<evidence type="ECO:0000269" key="2">
    <source>
    </source>
</evidence>
<evidence type="ECO:0000269" key="3">
    <source>
    </source>
</evidence>
<evidence type="ECO:0000305" key="4"/>
<name>TAX4_YEAST</name>
<protein>
    <recommendedName>
        <fullName>Protein TAX4</fullName>
    </recommendedName>
</protein>
<gene>
    <name type="primary">TAX4</name>
    <name type="ordered locus">YJL083W</name>
    <name type="ORF">J1002</name>
</gene>
<comment type="function">
    <text evidence="3">With IRS4, acts as a positive regulator of INP51 activity and phosphatidylinositol 4,5-bisphosphate turnover. Negatively regulates signaling through the cell integrity pathway, including the MAP kinase SLT2.</text>
</comment>
<comment type="subunit">
    <text evidence="3">Interacts with INP51.</text>
</comment>
<comment type="interaction">
    <interactant intactId="EBI-25970">
        <id>P47030</id>
    </interactant>
    <interactant intactId="EBI-24915">
        <id>P40559</id>
        <label>INP51</label>
    </interactant>
    <organismsDiffer>false</organismsDiffer>
    <experiments>3</experiments>
</comment>
<comment type="miscellaneous">
    <text evidence="2">Present with 396 molecules/cell in log phase SD medium.</text>
</comment>
<comment type="similarity">
    <text evidence="4">Belongs to the IRS4 family.</text>
</comment>